<proteinExistence type="inferred from homology"/>
<organism>
    <name type="scientific">Influenza A virus (strain A/Brazil/11/1978 H1N1)</name>
    <dbReference type="NCBI Taxonomy" id="393560"/>
    <lineage>
        <taxon>Viruses</taxon>
        <taxon>Riboviria</taxon>
        <taxon>Orthornavirae</taxon>
        <taxon>Negarnaviricota</taxon>
        <taxon>Polyploviricotina</taxon>
        <taxon>Insthoviricetes</taxon>
        <taxon>Articulavirales</taxon>
        <taxon>Orthomyxoviridae</taxon>
        <taxon>Alphainfluenzavirus</taxon>
        <taxon>Alphainfluenzavirus influenzae</taxon>
        <taxon>Influenza A virus</taxon>
    </lineage>
</organism>
<dbReference type="EC" id="2.7.7.48" evidence="2"/>
<dbReference type="EMBL" id="CY020299">
    <property type="protein sequence ID" value="ABO38073.1"/>
    <property type="molecule type" value="Viral_cRNA"/>
</dbReference>
<dbReference type="SMR" id="A4GBY5"/>
<dbReference type="Proteomes" id="UP000008025">
    <property type="component" value="Genome"/>
</dbReference>
<dbReference type="GO" id="GO:0030430">
    <property type="term" value="C:host cell cytoplasm"/>
    <property type="evidence" value="ECO:0007669"/>
    <property type="project" value="UniProtKB-SubCell"/>
</dbReference>
<dbReference type="GO" id="GO:0042025">
    <property type="term" value="C:host cell nucleus"/>
    <property type="evidence" value="ECO:0007669"/>
    <property type="project" value="UniProtKB-SubCell"/>
</dbReference>
<dbReference type="GO" id="GO:0000166">
    <property type="term" value="F:nucleotide binding"/>
    <property type="evidence" value="ECO:0007669"/>
    <property type="project" value="UniProtKB-UniRule"/>
</dbReference>
<dbReference type="GO" id="GO:0003723">
    <property type="term" value="F:RNA binding"/>
    <property type="evidence" value="ECO:0007669"/>
    <property type="project" value="InterPro"/>
</dbReference>
<dbReference type="GO" id="GO:0003968">
    <property type="term" value="F:RNA-directed RNA polymerase activity"/>
    <property type="evidence" value="ECO:0007669"/>
    <property type="project" value="UniProtKB-UniRule"/>
</dbReference>
<dbReference type="GO" id="GO:0006351">
    <property type="term" value="P:DNA-templated transcription"/>
    <property type="evidence" value="ECO:0007669"/>
    <property type="project" value="UniProtKB-UniRule"/>
</dbReference>
<dbReference type="GO" id="GO:0039657">
    <property type="term" value="P:symbiont-mediated suppression of host gene expression"/>
    <property type="evidence" value="ECO:0007669"/>
    <property type="project" value="UniProtKB-KW"/>
</dbReference>
<dbReference type="GO" id="GO:0039523">
    <property type="term" value="P:symbiont-mediated suppression of host mRNA transcription via inhibition of RNA polymerase II activity"/>
    <property type="evidence" value="ECO:0007669"/>
    <property type="project" value="UniProtKB-UniRule"/>
</dbReference>
<dbReference type="GO" id="GO:0039694">
    <property type="term" value="P:viral RNA genome replication"/>
    <property type="evidence" value="ECO:0007669"/>
    <property type="project" value="UniProtKB-UniRule"/>
</dbReference>
<dbReference type="GO" id="GO:0019083">
    <property type="term" value="P:viral transcription"/>
    <property type="evidence" value="ECO:0007669"/>
    <property type="project" value="UniProtKB-KW"/>
</dbReference>
<dbReference type="Gene3D" id="6.10.140.720">
    <property type="match status" value="1"/>
</dbReference>
<dbReference type="HAMAP" id="MF_04065">
    <property type="entry name" value="INFV_RDRP"/>
    <property type="match status" value="1"/>
</dbReference>
<dbReference type="InterPro" id="IPR007099">
    <property type="entry name" value="RNA-dir_pol_NSvirus"/>
</dbReference>
<dbReference type="InterPro" id="IPR001407">
    <property type="entry name" value="RNA_pol_PB1_influenza"/>
</dbReference>
<dbReference type="Pfam" id="PF00602">
    <property type="entry name" value="Flu_PB1"/>
    <property type="match status" value="1"/>
</dbReference>
<dbReference type="PIRSF" id="PIRSF000827">
    <property type="entry name" value="RdRPol_OMV"/>
    <property type="match status" value="1"/>
</dbReference>
<dbReference type="PROSITE" id="PS50525">
    <property type="entry name" value="RDRP_SSRNA_NEG_SEG"/>
    <property type="match status" value="1"/>
</dbReference>
<accession>A4GBY5</accession>
<keyword id="KW-1262">Eukaryotic host gene expression shutoff by virus</keyword>
<keyword id="KW-1191">Eukaryotic host transcription shutoff by virus</keyword>
<keyword id="KW-1035">Host cytoplasm</keyword>
<keyword id="KW-1190">Host gene expression shutoff by virus</keyword>
<keyword id="KW-1048">Host nucleus</keyword>
<keyword id="KW-0945">Host-virus interaction</keyword>
<keyword id="KW-1104">Inhibition of host RNA polymerase II by virus</keyword>
<keyword id="KW-0547">Nucleotide-binding</keyword>
<keyword id="KW-0548">Nucleotidyltransferase</keyword>
<keyword id="KW-0597">Phosphoprotein</keyword>
<keyword id="KW-0696">RNA-directed RNA polymerase</keyword>
<keyword id="KW-0808">Transferase</keyword>
<keyword id="KW-0693">Viral RNA replication</keyword>
<keyword id="KW-1195">Viral transcription</keyword>
<gene>
    <name evidence="2" type="primary">PB1</name>
</gene>
<feature type="chain" id="PRO_0000373055" description="RNA-directed RNA polymerase catalytic subunit">
    <location>
        <begin position="1"/>
        <end position="757"/>
    </location>
</feature>
<feature type="domain" description="RdRp catalytic" evidence="2">
    <location>
        <begin position="286"/>
        <end position="483"/>
    </location>
</feature>
<feature type="region of interest" description="Disordered" evidence="3">
    <location>
        <begin position="53"/>
        <end position="82"/>
    </location>
</feature>
<feature type="region of interest" description="Promoter-binding site" evidence="2">
    <location>
        <begin position="249"/>
        <end position="256"/>
    </location>
</feature>
<feature type="short sequence motif" description="Nuclear localization signal" evidence="2">
    <location>
        <begin position="187"/>
        <end position="195"/>
    </location>
</feature>
<feature type="short sequence motif" description="Nuclear localization signal" evidence="2">
    <location>
        <begin position="203"/>
        <end position="216"/>
    </location>
</feature>
<protein>
    <recommendedName>
        <fullName evidence="2">RNA-directed RNA polymerase catalytic subunit</fullName>
        <ecNumber evidence="2">2.7.7.48</ecNumber>
    </recommendedName>
    <alternativeName>
        <fullName evidence="2">Polymerase basic protein 1</fullName>
        <shortName evidence="2">PB1</shortName>
    </alternativeName>
    <alternativeName>
        <fullName evidence="2">RNA-directed RNA polymerase subunit P1</fullName>
    </alternativeName>
</protein>
<comment type="function">
    <text evidence="2">RNA-dependent RNA polymerase which is responsible for replication and transcription of virus RNA segments. The transcription of viral mRNAs occurs by a unique mechanism called cap-snatching. 5' methylated caps of cellular mRNAs are cleaved after 10-13 nucleotides by PA. In turn, these short capped RNAs are used as primers by PB1 for transcription of viral mRNAs. During virus replication, PB1 initiates RNA synthesis and copy vRNA into complementary RNA (cRNA) which in turn serves as a template for the production of more vRNAs.</text>
</comment>
<comment type="catalytic activity">
    <reaction evidence="2">
        <text>RNA(n) + a ribonucleoside 5'-triphosphate = RNA(n+1) + diphosphate</text>
        <dbReference type="Rhea" id="RHEA:21248"/>
        <dbReference type="Rhea" id="RHEA-COMP:14527"/>
        <dbReference type="Rhea" id="RHEA-COMP:17342"/>
        <dbReference type="ChEBI" id="CHEBI:33019"/>
        <dbReference type="ChEBI" id="CHEBI:61557"/>
        <dbReference type="ChEBI" id="CHEBI:140395"/>
        <dbReference type="EC" id="2.7.7.48"/>
    </reaction>
</comment>
<comment type="subunit">
    <text evidence="1 2">Influenza RNA polymerase is composed of three subunits: PB1, PB2 and PA. Interacts (via N-terminus) with PA (via C-terminus). Interacts (via C-terminus) with PB2 (via N-terminus); this interaction is essential for transcription initiation. Interacts (via C-terminus) with human PKP2 (via N-terminus); the interaction competitively inhibits the interaction between the RNA polymerase subunits PB1 and PB2 (By similarity).</text>
</comment>
<comment type="subcellular location">
    <subcellularLocation>
        <location evidence="2">Host nucleus</location>
    </subcellularLocation>
    <subcellularLocation>
        <location evidence="2">Host cytoplasm</location>
    </subcellularLocation>
</comment>
<comment type="PTM">
    <text evidence="2">Phosphorylated by host PRKCA.</text>
</comment>
<comment type="similarity">
    <text evidence="2">Belongs to the influenza viruses polymerase PB1 family.</text>
</comment>
<name>RDRP_I77AA</name>
<sequence length="757" mass="86602">MDVNPTLLFLKVPAQNAISTTFPYTGDPPYSHGTGTGYTMDTVNRTHQYSERGRWTKNTETGAPQLNPIDGPLPKDNEPSGYAQTDCVLEAMAFLEESHPGIFENSCIETMEVVQQTRVDKLTQGRQTYDWTLNRNQPAATALANTIEVFRSNGLMANESGRLIDFLKDVMESMDREEVEITTHFQRKRRVRDNVTKKMVTQRTIGKKKQRLNKRSYLIRALTLNTMTKDAERGKLKRRAIATPGMQIRGFVYFVETLARSICEKLEQSGLPVGGNEKKAKLANVVRKMMTNSQDTEISFTITGDNTKWNENQNPRMFLAMITYITRNQPEWFRNILSIAPIMFSNKMARLGKGYMFESKSMKLRTQIPAEMLANIDLKYFNDSTRKKIEKIRPLLIDGTASLSPGMMMGMFNMLSTVLGVSILNLGQKRYTKTTYWWDGLQSSDDFALIVNAPNYAGIQAGVDRFYRTCKLLGINMSKKKSYINRTGTFEFTSFFYRYGFVANFSMELPSFGVSGINESADMSIGVTVIKNNMINNDLGPATAQMALQLFIKDYRYTYRCHRGDTQIQTRRSFEIKKLWEQTRSKAGLLVSDGGPNLYNIRNLHIPEVCLKWELMDEDYQGRLCNPLNPFVSHKEIESVNNAVMMPAHGPAKNMEYDAVATTHSWVPKRNRSILNTSQRGILEDEQMYQRCCNLFEKFFPSSSYRRPVGISSMVEAMVSRARIDARIDFESGRIKKEEFTEIMKTCSTIEELRRQK</sequence>
<evidence type="ECO:0000250" key="1">
    <source>
        <dbReference type="UniProtKB" id="P03431"/>
    </source>
</evidence>
<evidence type="ECO:0000255" key="2">
    <source>
        <dbReference type="HAMAP-Rule" id="MF_04065"/>
    </source>
</evidence>
<evidence type="ECO:0000256" key="3">
    <source>
        <dbReference type="SAM" id="MobiDB-lite"/>
    </source>
</evidence>
<reference key="1">
    <citation type="submission" date="2007-03" db="EMBL/GenBank/DDBJ databases">
        <title>The NIAID influenza genome sequencing project.</title>
        <authorList>
            <person name="Ghedin E."/>
            <person name="Spiro D."/>
            <person name="Miller N."/>
            <person name="Zaborsky J."/>
            <person name="Feldblyum T."/>
            <person name="Subbu V."/>
            <person name="Shumway M."/>
            <person name="Sparenborg J."/>
            <person name="Groveman L."/>
            <person name="Halpin R."/>
            <person name="Sitz J."/>
            <person name="Koo H."/>
            <person name="Salzberg S.L."/>
            <person name="Webster R.G."/>
            <person name="Hoffmann E."/>
            <person name="Krauss S."/>
            <person name="Naeve C."/>
            <person name="Bao Y."/>
            <person name="Bolotov P."/>
            <person name="Dernovoy D."/>
            <person name="Kiryutin B."/>
            <person name="Lipman D.J."/>
            <person name="Tatusova T."/>
        </authorList>
    </citation>
    <scope>NUCLEOTIDE SEQUENCE [GENOMIC RNA]</scope>
</reference>
<reference key="2">
    <citation type="submission" date="2007-03" db="EMBL/GenBank/DDBJ databases">
        <authorList>
            <consortium name="The NIAID Influenza Genome Sequencing Consortium"/>
        </authorList>
    </citation>
    <scope>NUCLEOTIDE SEQUENCE [GENOMIC RNA]</scope>
</reference>
<organismHost>
    <name type="scientific">Aves</name>
    <dbReference type="NCBI Taxonomy" id="8782"/>
</organismHost>
<organismHost>
    <name type="scientific">Homo sapiens</name>
    <name type="common">Human</name>
    <dbReference type="NCBI Taxonomy" id="9606"/>
</organismHost>
<organismHost>
    <name type="scientific">Sus scrofa</name>
    <name type="common">Pig</name>
    <dbReference type="NCBI Taxonomy" id="9823"/>
</organismHost>